<dbReference type="EMBL" id="CR848038">
    <property type="protein sequence ID" value="CAH63768.1"/>
    <property type="molecule type" value="Genomic_DNA"/>
</dbReference>
<dbReference type="RefSeq" id="WP_011096982.1">
    <property type="nucleotide sequence ID" value="NC_004552.2"/>
</dbReference>
<dbReference type="SMR" id="Q5L6F7"/>
<dbReference type="KEGG" id="cab:CAB318"/>
<dbReference type="eggNOG" id="COG0484">
    <property type="taxonomic scope" value="Bacteria"/>
</dbReference>
<dbReference type="HOGENOM" id="CLU_017633_0_7_0"/>
<dbReference type="OrthoDB" id="9779889at2"/>
<dbReference type="Proteomes" id="UP000001012">
    <property type="component" value="Chromosome"/>
</dbReference>
<dbReference type="GO" id="GO:0005737">
    <property type="term" value="C:cytoplasm"/>
    <property type="evidence" value="ECO:0007669"/>
    <property type="project" value="UniProtKB-SubCell"/>
</dbReference>
<dbReference type="GO" id="GO:0005524">
    <property type="term" value="F:ATP binding"/>
    <property type="evidence" value="ECO:0007669"/>
    <property type="project" value="InterPro"/>
</dbReference>
<dbReference type="GO" id="GO:0031072">
    <property type="term" value="F:heat shock protein binding"/>
    <property type="evidence" value="ECO:0007669"/>
    <property type="project" value="InterPro"/>
</dbReference>
<dbReference type="GO" id="GO:0051082">
    <property type="term" value="F:unfolded protein binding"/>
    <property type="evidence" value="ECO:0007669"/>
    <property type="project" value="UniProtKB-UniRule"/>
</dbReference>
<dbReference type="GO" id="GO:0008270">
    <property type="term" value="F:zinc ion binding"/>
    <property type="evidence" value="ECO:0007669"/>
    <property type="project" value="UniProtKB-UniRule"/>
</dbReference>
<dbReference type="GO" id="GO:0051085">
    <property type="term" value="P:chaperone cofactor-dependent protein refolding"/>
    <property type="evidence" value="ECO:0007669"/>
    <property type="project" value="TreeGrafter"/>
</dbReference>
<dbReference type="GO" id="GO:0006260">
    <property type="term" value="P:DNA replication"/>
    <property type="evidence" value="ECO:0007669"/>
    <property type="project" value="UniProtKB-KW"/>
</dbReference>
<dbReference type="GO" id="GO:0042026">
    <property type="term" value="P:protein refolding"/>
    <property type="evidence" value="ECO:0007669"/>
    <property type="project" value="TreeGrafter"/>
</dbReference>
<dbReference type="GO" id="GO:0009408">
    <property type="term" value="P:response to heat"/>
    <property type="evidence" value="ECO:0007669"/>
    <property type="project" value="InterPro"/>
</dbReference>
<dbReference type="CDD" id="cd06257">
    <property type="entry name" value="DnaJ"/>
    <property type="match status" value="1"/>
</dbReference>
<dbReference type="CDD" id="cd10747">
    <property type="entry name" value="DnaJ_C"/>
    <property type="match status" value="1"/>
</dbReference>
<dbReference type="CDD" id="cd10719">
    <property type="entry name" value="DnaJ_zf"/>
    <property type="match status" value="1"/>
</dbReference>
<dbReference type="FunFam" id="1.10.287.110:FF:000034">
    <property type="entry name" value="Chaperone protein DnaJ"/>
    <property type="match status" value="1"/>
</dbReference>
<dbReference type="FunFam" id="2.60.260.20:FF:000005">
    <property type="entry name" value="Chaperone protein dnaJ 1, mitochondrial"/>
    <property type="match status" value="1"/>
</dbReference>
<dbReference type="FunFam" id="2.10.230.10:FF:000002">
    <property type="entry name" value="Molecular chaperone DnaJ"/>
    <property type="match status" value="1"/>
</dbReference>
<dbReference type="Gene3D" id="1.10.287.110">
    <property type="entry name" value="DnaJ domain"/>
    <property type="match status" value="1"/>
</dbReference>
<dbReference type="Gene3D" id="2.10.230.10">
    <property type="entry name" value="Heat shock protein DnaJ, cysteine-rich domain"/>
    <property type="match status" value="1"/>
</dbReference>
<dbReference type="Gene3D" id="2.60.260.20">
    <property type="entry name" value="Urease metallochaperone UreE, N-terminal domain"/>
    <property type="match status" value="2"/>
</dbReference>
<dbReference type="HAMAP" id="MF_01152">
    <property type="entry name" value="DnaJ"/>
    <property type="match status" value="1"/>
</dbReference>
<dbReference type="InterPro" id="IPR012724">
    <property type="entry name" value="DnaJ"/>
</dbReference>
<dbReference type="InterPro" id="IPR002939">
    <property type="entry name" value="DnaJ_C"/>
</dbReference>
<dbReference type="InterPro" id="IPR001623">
    <property type="entry name" value="DnaJ_domain"/>
</dbReference>
<dbReference type="InterPro" id="IPR018253">
    <property type="entry name" value="DnaJ_domain_CS"/>
</dbReference>
<dbReference type="InterPro" id="IPR008971">
    <property type="entry name" value="HSP40/DnaJ_pept-bd"/>
</dbReference>
<dbReference type="InterPro" id="IPR001305">
    <property type="entry name" value="HSP_DnaJ_Cys-rich_dom"/>
</dbReference>
<dbReference type="InterPro" id="IPR036410">
    <property type="entry name" value="HSP_DnaJ_Cys-rich_dom_sf"/>
</dbReference>
<dbReference type="InterPro" id="IPR036869">
    <property type="entry name" value="J_dom_sf"/>
</dbReference>
<dbReference type="NCBIfam" id="TIGR02349">
    <property type="entry name" value="DnaJ_bact"/>
    <property type="match status" value="1"/>
</dbReference>
<dbReference type="NCBIfam" id="NF008035">
    <property type="entry name" value="PRK10767.1"/>
    <property type="match status" value="1"/>
</dbReference>
<dbReference type="NCBIfam" id="NF010877">
    <property type="entry name" value="PRK14284.1"/>
    <property type="match status" value="1"/>
</dbReference>
<dbReference type="PANTHER" id="PTHR43096:SF48">
    <property type="entry name" value="CHAPERONE PROTEIN DNAJ"/>
    <property type="match status" value="1"/>
</dbReference>
<dbReference type="PANTHER" id="PTHR43096">
    <property type="entry name" value="DNAJ HOMOLOG 1, MITOCHONDRIAL-RELATED"/>
    <property type="match status" value="1"/>
</dbReference>
<dbReference type="Pfam" id="PF00226">
    <property type="entry name" value="DnaJ"/>
    <property type="match status" value="1"/>
</dbReference>
<dbReference type="Pfam" id="PF01556">
    <property type="entry name" value="DnaJ_C"/>
    <property type="match status" value="1"/>
</dbReference>
<dbReference type="Pfam" id="PF00684">
    <property type="entry name" value="DnaJ_CXXCXGXG"/>
    <property type="match status" value="1"/>
</dbReference>
<dbReference type="PRINTS" id="PR00625">
    <property type="entry name" value="JDOMAIN"/>
</dbReference>
<dbReference type="SMART" id="SM00271">
    <property type="entry name" value="DnaJ"/>
    <property type="match status" value="1"/>
</dbReference>
<dbReference type="SUPFAM" id="SSF46565">
    <property type="entry name" value="Chaperone J-domain"/>
    <property type="match status" value="1"/>
</dbReference>
<dbReference type="SUPFAM" id="SSF57938">
    <property type="entry name" value="DnaJ/Hsp40 cysteine-rich domain"/>
    <property type="match status" value="1"/>
</dbReference>
<dbReference type="SUPFAM" id="SSF49493">
    <property type="entry name" value="HSP40/DnaJ peptide-binding domain"/>
    <property type="match status" value="2"/>
</dbReference>
<dbReference type="PROSITE" id="PS00636">
    <property type="entry name" value="DNAJ_1"/>
    <property type="match status" value="1"/>
</dbReference>
<dbReference type="PROSITE" id="PS50076">
    <property type="entry name" value="DNAJ_2"/>
    <property type="match status" value="1"/>
</dbReference>
<dbReference type="PROSITE" id="PS51188">
    <property type="entry name" value="ZF_CR"/>
    <property type="match status" value="1"/>
</dbReference>
<comment type="function">
    <text evidence="1">Participates actively in the response to hyperosmotic and heat shock by preventing the aggregation of stress-denatured proteins and by disaggregating proteins, also in an autonomous, DnaK-independent fashion. Unfolded proteins bind initially to DnaJ; upon interaction with the DnaJ-bound protein, DnaK hydrolyzes its bound ATP, resulting in the formation of a stable complex. GrpE releases ADP from DnaK; ATP binding to DnaK triggers the release of the substrate protein, thus completing the reaction cycle. Several rounds of ATP-dependent interactions between DnaJ, DnaK and GrpE are required for fully efficient folding. Also involved, together with DnaK and GrpE, in the DNA replication of plasmids through activation of initiation proteins.</text>
</comment>
<comment type="cofactor">
    <cofactor evidence="1">
        <name>Zn(2+)</name>
        <dbReference type="ChEBI" id="CHEBI:29105"/>
    </cofactor>
    <text evidence="1">Binds 2 Zn(2+) ions per monomer.</text>
</comment>
<comment type="subunit">
    <text evidence="1">Homodimer.</text>
</comment>
<comment type="subcellular location">
    <subcellularLocation>
        <location evidence="1">Cytoplasm</location>
    </subcellularLocation>
</comment>
<comment type="domain">
    <text evidence="1">The J domain is necessary and sufficient to stimulate DnaK ATPase activity. Zinc center 1 plays an important role in the autonomous, DnaK-independent chaperone activity of DnaJ. Zinc center 2 is essential for interaction with DnaK and for DnaJ activity.</text>
</comment>
<comment type="similarity">
    <text evidence="1">Belongs to the DnaJ family.</text>
</comment>
<proteinExistence type="inferred from homology"/>
<organism>
    <name type="scientific">Chlamydia abortus (strain DSM 27085 / S26/3)</name>
    <name type="common">Chlamydophila abortus</name>
    <dbReference type="NCBI Taxonomy" id="218497"/>
    <lineage>
        <taxon>Bacteria</taxon>
        <taxon>Pseudomonadati</taxon>
        <taxon>Chlamydiota</taxon>
        <taxon>Chlamydiia</taxon>
        <taxon>Chlamydiales</taxon>
        <taxon>Chlamydiaceae</taxon>
        <taxon>Chlamydia/Chlamydophila group</taxon>
        <taxon>Chlamydia</taxon>
    </lineage>
</organism>
<keyword id="KW-0143">Chaperone</keyword>
<keyword id="KW-0963">Cytoplasm</keyword>
<keyword id="KW-0235">DNA replication</keyword>
<keyword id="KW-0479">Metal-binding</keyword>
<keyword id="KW-0677">Repeat</keyword>
<keyword id="KW-0346">Stress response</keyword>
<keyword id="KW-0862">Zinc</keyword>
<keyword id="KW-0863">Zinc-finger</keyword>
<reference key="1">
    <citation type="journal article" date="2005" name="Genome Res.">
        <title>The Chlamydophila abortus genome sequence reveals an array of variable proteins that contribute to interspecies variation.</title>
        <authorList>
            <person name="Thomson N.R."/>
            <person name="Yeats C."/>
            <person name="Bell K."/>
            <person name="Holden M.T.G."/>
            <person name="Bentley S.D."/>
            <person name="Livingstone M."/>
            <person name="Cerdeno-Tarraga A.-M."/>
            <person name="Harris B."/>
            <person name="Doggett J."/>
            <person name="Ormond D."/>
            <person name="Mungall K."/>
            <person name="Clarke K."/>
            <person name="Feltwell T."/>
            <person name="Hance Z."/>
            <person name="Sanders M."/>
            <person name="Quail M.A."/>
            <person name="Price C."/>
            <person name="Barrell B.G."/>
            <person name="Parkhill J."/>
            <person name="Longbottom D."/>
        </authorList>
    </citation>
    <scope>NUCLEOTIDE SEQUENCE [LARGE SCALE GENOMIC DNA]</scope>
    <source>
        <strain>DSM 27085 / S26/3</strain>
    </source>
</reference>
<accession>Q5L6F7</accession>
<feature type="chain" id="PRO_0000070755" description="Chaperone protein DnaJ">
    <location>
        <begin position="1"/>
        <end position="391"/>
    </location>
</feature>
<feature type="domain" description="J" evidence="1">
    <location>
        <begin position="2"/>
        <end position="67"/>
    </location>
</feature>
<feature type="repeat" description="CXXCXGXG motif">
    <location>
        <begin position="161"/>
        <end position="168"/>
    </location>
</feature>
<feature type="repeat" description="CXXCXGXG motif">
    <location>
        <begin position="178"/>
        <end position="185"/>
    </location>
</feature>
<feature type="repeat" description="CXXCXGXG motif">
    <location>
        <begin position="200"/>
        <end position="207"/>
    </location>
</feature>
<feature type="repeat" description="CXXCXGXG motif">
    <location>
        <begin position="214"/>
        <end position="221"/>
    </location>
</feature>
<feature type="zinc finger region" description="CR-type" evidence="1">
    <location>
        <begin position="148"/>
        <end position="226"/>
    </location>
</feature>
<feature type="binding site" evidence="1">
    <location>
        <position position="161"/>
    </location>
    <ligand>
        <name>Zn(2+)</name>
        <dbReference type="ChEBI" id="CHEBI:29105"/>
        <label>1</label>
    </ligand>
</feature>
<feature type="binding site" evidence="1">
    <location>
        <position position="164"/>
    </location>
    <ligand>
        <name>Zn(2+)</name>
        <dbReference type="ChEBI" id="CHEBI:29105"/>
        <label>1</label>
    </ligand>
</feature>
<feature type="binding site" evidence="1">
    <location>
        <position position="178"/>
    </location>
    <ligand>
        <name>Zn(2+)</name>
        <dbReference type="ChEBI" id="CHEBI:29105"/>
        <label>2</label>
    </ligand>
</feature>
<feature type="binding site" evidence="1">
    <location>
        <position position="181"/>
    </location>
    <ligand>
        <name>Zn(2+)</name>
        <dbReference type="ChEBI" id="CHEBI:29105"/>
        <label>2</label>
    </ligand>
</feature>
<feature type="binding site" evidence="1">
    <location>
        <position position="200"/>
    </location>
    <ligand>
        <name>Zn(2+)</name>
        <dbReference type="ChEBI" id="CHEBI:29105"/>
        <label>2</label>
    </ligand>
</feature>
<feature type="binding site" evidence="1">
    <location>
        <position position="203"/>
    </location>
    <ligand>
        <name>Zn(2+)</name>
        <dbReference type="ChEBI" id="CHEBI:29105"/>
        <label>2</label>
    </ligand>
</feature>
<feature type="binding site" evidence="1">
    <location>
        <position position="214"/>
    </location>
    <ligand>
        <name>Zn(2+)</name>
        <dbReference type="ChEBI" id="CHEBI:29105"/>
        <label>1</label>
    </ligand>
</feature>
<feature type="binding site" evidence="1">
    <location>
        <position position="217"/>
    </location>
    <ligand>
        <name>Zn(2+)</name>
        <dbReference type="ChEBI" id="CHEBI:29105"/>
        <label>1</label>
    </ligand>
</feature>
<gene>
    <name evidence="1" type="primary">dnaJ</name>
    <name type="ordered locus">CAB318</name>
</gene>
<name>DNAJ_CHLAB</name>
<evidence type="ECO:0000255" key="1">
    <source>
        <dbReference type="HAMAP-Rule" id="MF_01152"/>
    </source>
</evidence>
<sequence>MDYYDVLGVSKTASPEEIKKSYRKLAVKYHPDKNPGDAEAEKRFKEVSEAYEVLSDPQKRESYDRYGKDGPFAGAGGFGGAGMSNMEDALRTFMGAFGGELGGSGSFFEGLFGGLGEAFGMRGDPAGARQGASKKVHITLTFEEAARGVKKELLVSGYKTCETCSGSGASSKQGIKCCDRCKGSGQVVQSRGFFSMASTCPECGGEGRMITDPCSSCRGQGRIKDKRSVHVQIPAGVDSGMRLKMEGYGDAGQNGAPAGDLYVFIDVEAHPVFERRGDDLILELPIGFVDAALGMKKEVPTLLKEGACRLTVPEGIQSGTILKIKNQGFPNVHGRGRGDLLVRVSVETPQNLSEEQKELLRKFAATEKAENFPKKRSFLDKIKGFFSDLTV</sequence>
<protein>
    <recommendedName>
        <fullName evidence="1">Chaperone protein DnaJ</fullName>
    </recommendedName>
</protein>